<gene>
    <name type="ordered locus">aq_1476</name>
</gene>
<keyword id="KW-0175">Coiled coil</keyword>
<keyword id="KW-1185">Reference proteome</keyword>
<organism>
    <name type="scientific">Aquifex aeolicus (strain VF5)</name>
    <dbReference type="NCBI Taxonomy" id="224324"/>
    <lineage>
        <taxon>Bacteria</taxon>
        <taxon>Pseudomonadati</taxon>
        <taxon>Aquificota</taxon>
        <taxon>Aquificia</taxon>
        <taxon>Aquificales</taxon>
        <taxon>Aquificaceae</taxon>
        <taxon>Aquifex</taxon>
    </lineage>
</organism>
<name>Y1476_AQUAE</name>
<reference key="1">
    <citation type="journal article" date="1998" name="Nature">
        <title>The complete genome of the hyperthermophilic bacterium Aquifex aeolicus.</title>
        <authorList>
            <person name="Deckert G."/>
            <person name="Warren P.V."/>
            <person name="Gaasterland T."/>
            <person name="Young W.G."/>
            <person name="Lenox A.L."/>
            <person name="Graham D.E."/>
            <person name="Overbeek R."/>
            <person name="Snead M.A."/>
            <person name="Keller M."/>
            <person name="Aujay M."/>
            <person name="Huber R."/>
            <person name="Feldman R.A."/>
            <person name="Short J.M."/>
            <person name="Olsen G.J."/>
            <person name="Swanson R.V."/>
        </authorList>
    </citation>
    <scope>NUCLEOTIDE SEQUENCE [LARGE SCALE GENOMIC DNA]</scope>
    <source>
        <strain>VF5</strain>
    </source>
</reference>
<dbReference type="EMBL" id="AE000657">
    <property type="protein sequence ID" value="AAC07421.1"/>
    <property type="molecule type" value="Genomic_DNA"/>
</dbReference>
<dbReference type="PIR" id="C70428">
    <property type="entry name" value="C70428"/>
</dbReference>
<dbReference type="RefSeq" id="NP_214018.1">
    <property type="nucleotide sequence ID" value="NC_000918.1"/>
</dbReference>
<dbReference type="SMR" id="O67453"/>
<dbReference type="STRING" id="224324.aq_1476"/>
<dbReference type="EnsemblBacteria" id="AAC07421">
    <property type="protein sequence ID" value="AAC07421"/>
    <property type="gene ID" value="aq_1476"/>
</dbReference>
<dbReference type="KEGG" id="aae:aq_1476"/>
<dbReference type="eggNOG" id="COG1579">
    <property type="taxonomic scope" value="Bacteria"/>
</dbReference>
<dbReference type="HOGENOM" id="CLU_1493248_0_0_0"/>
<dbReference type="InParanoid" id="O67453"/>
<dbReference type="OrthoDB" id="15338at2"/>
<dbReference type="Proteomes" id="UP000000798">
    <property type="component" value="Chromosome"/>
</dbReference>
<dbReference type="Gene3D" id="1.10.287.1490">
    <property type="match status" value="1"/>
</dbReference>
<proteinExistence type="predicted"/>
<accession>O67453</accession>
<sequence length="180" mass="22125">MMLKSLTMENVKVVTGEIEKLRERIEKVKETLDLIPKEIEELERELERVRQEIAKKEDELIAVAREIRHKEHEFTEVKQKIAYHRKYLERADSPREYERLLQERQKLIERAYKLSEEIYELRRKYEALREEEEKLHQKEDEIEEKIHKLKKEYRALLNELKGLIEELNRKAREIIEKYGL</sequence>
<evidence type="ECO:0000255" key="1"/>
<feature type="chain" id="PRO_0000186930" description="Uncharacterized protein aq_1476">
    <location>
        <begin position="1"/>
        <end position="180"/>
    </location>
</feature>
<feature type="coiled-coil region" evidence="1">
    <location>
        <begin position="3"/>
        <end position="82"/>
    </location>
</feature>
<feature type="coiled-coil region" evidence="1">
    <location>
        <begin position="95"/>
        <end position="179"/>
    </location>
</feature>
<protein>
    <recommendedName>
        <fullName>Uncharacterized protein aq_1476</fullName>
    </recommendedName>
</protein>